<feature type="signal peptide" evidence="2">
    <location>
        <begin position="1"/>
        <end position="25"/>
    </location>
</feature>
<feature type="chain" id="PRO_0000425536" description="Alkaline phosphatase PafA" evidence="2">
    <location>
        <begin position="26"/>
        <end position="546"/>
    </location>
</feature>
<feature type="active site" description="Phosphothreonine intermediate" evidence="1">
    <location>
        <position position="79"/>
    </location>
</feature>
<feature type="binding site" evidence="1">
    <location>
        <position position="38"/>
    </location>
    <ligand>
        <name>Zn(2+)</name>
        <dbReference type="ChEBI" id="CHEBI:29105"/>
        <label>1</label>
    </ligand>
</feature>
<feature type="binding site" evidence="1">
    <location>
        <position position="79"/>
    </location>
    <ligand>
        <name>Zn(2+)</name>
        <dbReference type="ChEBI" id="CHEBI:29105"/>
        <label>1</label>
    </ligand>
</feature>
<feature type="binding site" evidence="1">
    <location>
        <position position="100"/>
    </location>
    <ligand>
        <name>substrate</name>
    </ligand>
</feature>
<feature type="binding site" evidence="1">
    <location>
        <begin position="162"/>
        <end position="164"/>
    </location>
    <ligand>
        <name>substrate</name>
    </ligand>
</feature>
<feature type="binding site" evidence="1">
    <location>
        <position position="305"/>
    </location>
    <ligand>
        <name>Zn(2+)</name>
        <dbReference type="ChEBI" id="CHEBI:29105"/>
        <label>2</label>
    </ligand>
</feature>
<feature type="binding site" evidence="1">
    <location>
        <position position="309"/>
    </location>
    <ligand>
        <name>Zn(2+)</name>
        <dbReference type="ChEBI" id="CHEBI:29105"/>
        <label>2</label>
    </ligand>
</feature>
<feature type="binding site" evidence="1">
    <location>
        <position position="352"/>
    </location>
    <ligand>
        <name>Zn(2+)</name>
        <dbReference type="ChEBI" id="CHEBI:29105"/>
        <label>1</label>
    </ligand>
</feature>
<feature type="binding site" evidence="1">
    <location>
        <position position="353"/>
    </location>
    <ligand>
        <name>Zn(2+)</name>
        <dbReference type="ChEBI" id="CHEBI:29105"/>
        <label>1</label>
    </ligand>
</feature>
<feature type="binding site" evidence="1">
    <location>
        <position position="486"/>
    </location>
    <ligand>
        <name>Zn(2+)</name>
        <dbReference type="ChEBI" id="CHEBI:29105"/>
        <label>2</label>
    </ligand>
</feature>
<feature type="strand" evidence="7">
    <location>
        <begin position="30"/>
        <end position="37"/>
    </location>
</feature>
<feature type="helix" evidence="7">
    <location>
        <begin position="44"/>
        <end position="47"/>
    </location>
</feature>
<feature type="helix" evidence="7">
    <location>
        <begin position="49"/>
        <end position="51"/>
    </location>
</feature>
<feature type="strand" evidence="7">
    <location>
        <begin position="54"/>
        <end position="56"/>
    </location>
</feature>
<feature type="helix" evidence="7">
    <location>
        <begin position="57"/>
        <end position="63"/>
    </location>
</feature>
<feature type="strand" evidence="7">
    <location>
        <begin position="64"/>
        <end position="68"/>
    </location>
</feature>
<feature type="helix" evidence="7">
    <location>
        <begin position="79"/>
        <end position="88"/>
    </location>
</feature>
<feature type="helix" evidence="7">
    <location>
        <begin position="92"/>
        <end position="95"/>
    </location>
</feature>
<feature type="strand" evidence="7">
    <location>
        <begin position="99"/>
        <end position="104"/>
    </location>
</feature>
<feature type="turn" evidence="7">
    <location>
        <begin position="105"/>
        <end position="108"/>
    </location>
</feature>
<feature type="strand" evidence="7">
    <location>
        <begin position="109"/>
        <end position="112"/>
    </location>
</feature>
<feature type="strand" evidence="7">
    <location>
        <begin position="121"/>
        <end position="123"/>
    </location>
</feature>
<feature type="helix" evidence="7">
    <location>
        <begin position="127"/>
        <end position="130"/>
    </location>
</feature>
<feature type="helix" evidence="7">
    <location>
        <begin position="142"/>
        <end position="149"/>
    </location>
</feature>
<feature type="turn" evidence="7">
    <location>
        <begin position="150"/>
        <end position="152"/>
    </location>
</feature>
<feature type="strand" evidence="7">
    <location>
        <begin position="156"/>
        <end position="159"/>
    </location>
</feature>
<feature type="helix" evidence="7">
    <location>
        <begin position="163"/>
        <end position="170"/>
    </location>
</feature>
<feature type="strand" evidence="7">
    <location>
        <begin position="175"/>
        <end position="180"/>
    </location>
</feature>
<feature type="turn" evidence="7">
    <location>
        <begin position="182"/>
        <end position="184"/>
    </location>
</feature>
<feature type="strand" evidence="7">
    <location>
        <begin position="187"/>
        <end position="190"/>
    </location>
</feature>
<feature type="turn" evidence="7">
    <location>
        <begin position="191"/>
        <end position="193"/>
    </location>
</feature>
<feature type="helix" evidence="7">
    <location>
        <begin position="199"/>
        <end position="206"/>
    </location>
</feature>
<feature type="helix" evidence="7">
    <location>
        <begin position="209"/>
        <end position="213"/>
    </location>
</feature>
<feature type="turn" evidence="7">
    <location>
        <begin position="214"/>
        <end position="216"/>
    </location>
</feature>
<feature type="helix" evidence="7">
    <location>
        <begin position="224"/>
        <end position="226"/>
    </location>
</feature>
<feature type="strand" evidence="7">
    <location>
        <begin position="245"/>
        <end position="247"/>
    </location>
</feature>
<feature type="helix" evidence="7">
    <location>
        <begin position="254"/>
        <end position="260"/>
    </location>
</feature>
<feature type="helix" evidence="7">
    <location>
        <begin position="262"/>
        <end position="267"/>
    </location>
</feature>
<feature type="helix" evidence="7">
    <location>
        <begin position="269"/>
        <end position="285"/>
    </location>
</feature>
<feature type="turn" evidence="7">
    <location>
        <begin position="286"/>
        <end position="289"/>
    </location>
</feature>
<feature type="strand" evidence="7">
    <location>
        <begin position="290"/>
        <end position="293"/>
    </location>
</feature>
<feature type="strand" evidence="7">
    <location>
        <begin position="295"/>
        <end position="301"/>
    </location>
</feature>
<feature type="helix" evidence="7">
    <location>
        <begin position="303"/>
        <end position="311"/>
    </location>
</feature>
<feature type="helix" evidence="7">
    <location>
        <begin position="316"/>
        <end position="339"/>
    </location>
</feature>
<feature type="strand" evidence="7">
    <location>
        <begin position="344"/>
        <end position="350"/>
    </location>
</feature>
<feature type="helix" evidence="7">
    <location>
        <begin position="359"/>
        <end position="364"/>
    </location>
</feature>
<feature type="helix" evidence="7">
    <location>
        <begin position="376"/>
        <end position="388"/>
    </location>
</feature>
<feature type="strand" evidence="7">
    <location>
        <begin position="394"/>
        <end position="398"/>
    </location>
</feature>
<feature type="strand" evidence="7">
    <location>
        <begin position="401"/>
        <end position="404"/>
    </location>
</feature>
<feature type="helix" evidence="7">
    <location>
        <begin position="406"/>
        <end position="412"/>
    </location>
</feature>
<feature type="helix" evidence="7">
    <location>
        <begin position="416"/>
        <end position="428"/>
    </location>
</feature>
<feature type="strand" evidence="7">
    <location>
        <begin position="433"/>
        <end position="438"/>
    </location>
</feature>
<feature type="helix" evidence="7">
    <location>
        <begin position="451"/>
        <end position="458"/>
    </location>
</feature>
<feature type="turn" evidence="7">
    <location>
        <begin position="461"/>
        <end position="463"/>
    </location>
</feature>
<feature type="strand" evidence="7">
    <location>
        <begin position="466"/>
        <end position="471"/>
    </location>
</feature>
<feature type="strand" evidence="7">
    <location>
        <begin position="481"/>
        <end position="483"/>
    </location>
</feature>
<feature type="strand" evidence="7">
    <location>
        <begin position="488"/>
        <end position="490"/>
    </location>
</feature>
<feature type="helix" evidence="7">
    <location>
        <begin position="491"/>
        <end position="494"/>
    </location>
</feature>
<feature type="strand" evidence="7">
    <location>
        <begin position="498"/>
        <end position="502"/>
    </location>
</feature>
<feature type="strand" evidence="7">
    <location>
        <begin position="507"/>
        <end position="510"/>
    </location>
</feature>
<feature type="helix" evidence="7">
    <location>
        <begin position="516"/>
        <end position="518"/>
    </location>
</feature>
<feature type="helix" evidence="7">
    <location>
        <begin position="519"/>
        <end position="527"/>
    </location>
</feature>
<feature type="turn" evidence="7">
    <location>
        <begin position="541"/>
        <end position="543"/>
    </location>
</feature>
<sequence length="546" mass="60753">MLTPKKWLLGVLVVSGMLGAQKTNAVPRPKLVVGLVVDQMRWDYLYRYYSKYGEGGFKRMLNTGYSLNNVHIDYVPTVTAIGHTSIFTGSVPSIHGIAGNDWYDKELGKSVYCTSDETVQPVGTTSNSVGQHSPRNLWSTTVTDQLGLATNFTSKVVGVSLKDRASILPAGHNPTGAFWFDDTTGKFITSTYYTKELPKWVNDFNNKNVPAQLVANGWNTLLPINQYTESSEDNVEWEGLLGSKKTPTFPYTDLAKDYEAKKGLIRTTPFGNTLTLQMADAAIDGNQMGVDDITDFLTVNLASTDYVGHNFGPNSIEVEDTYLRLDRDLADFFNNLDKKVGKGNYLVFLSADHGAAHSVGFMQAHKMPTGFFVEDMKKEMNAKLKQKFGADNIIAAAMNYQVYFDRKVLADSKLELDDVRDYVMTELKKEPSVLYVLSTDEIWESSIPEPIKSRVINGYNWKRSGDIQIISKDGYLSAYSKKGTTHSVWNSYDSHIPLLFMGWGIKQGESNQPYHMTDIAPTVSSLLKIQFPSGAVGKPITEVIGR</sequence>
<dbReference type="EC" id="3.1.3.1" evidence="3"/>
<dbReference type="EMBL" id="AF157621">
    <property type="protein sequence ID" value="AAF80345.1"/>
    <property type="molecule type" value="Genomic_DNA"/>
</dbReference>
<dbReference type="PDB" id="5TJ3">
    <property type="method" value="X-ray"/>
    <property type="resolution" value="1.70 A"/>
    <property type="chains" value="A=21-546"/>
</dbReference>
<dbReference type="PDB" id="5TOO">
    <property type="method" value="X-ray"/>
    <property type="resolution" value="1.70 A"/>
    <property type="chains" value="A=21-546"/>
</dbReference>
<dbReference type="PDBsum" id="5TJ3"/>
<dbReference type="PDBsum" id="5TOO"/>
<dbReference type="SMR" id="Q9KJX5"/>
<dbReference type="STRING" id="238.BBD35_02085"/>
<dbReference type="eggNOG" id="COG1524">
    <property type="taxonomic scope" value="Bacteria"/>
</dbReference>
<dbReference type="GO" id="GO:0042597">
    <property type="term" value="C:periplasmic space"/>
    <property type="evidence" value="ECO:0000314"/>
    <property type="project" value="UniProtKB"/>
</dbReference>
<dbReference type="GO" id="GO:0004035">
    <property type="term" value="F:alkaline phosphatase activity"/>
    <property type="evidence" value="ECO:0000314"/>
    <property type="project" value="UniProtKB"/>
</dbReference>
<dbReference type="GO" id="GO:0019203">
    <property type="term" value="F:carbohydrate phosphatase activity"/>
    <property type="evidence" value="ECO:0000314"/>
    <property type="project" value="UniProtKB"/>
</dbReference>
<dbReference type="GO" id="GO:0008877">
    <property type="term" value="F:glucose-1-phosphatase activity"/>
    <property type="evidence" value="ECO:0000314"/>
    <property type="project" value="UniProtKB"/>
</dbReference>
<dbReference type="GO" id="GO:0004346">
    <property type="term" value="F:glucose-6-phosphatase activity"/>
    <property type="evidence" value="ECO:0000314"/>
    <property type="project" value="UniProtKB"/>
</dbReference>
<dbReference type="GO" id="GO:0046872">
    <property type="term" value="F:metal ion binding"/>
    <property type="evidence" value="ECO:0000250"/>
    <property type="project" value="UniProtKB"/>
</dbReference>
<dbReference type="GO" id="GO:0050308">
    <property type="term" value="F:sugar-phosphatase activity"/>
    <property type="evidence" value="ECO:0000314"/>
    <property type="project" value="UniProtKB"/>
</dbReference>
<dbReference type="GO" id="GO:0008270">
    <property type="term" value="F:zinc ion binding"/>
    <property type="evidence" value="ECO:0000250"/>
    <property type="project" value="UniProtKB"/>
</dbReference>
<dbReference type="CDD" id="cd16016">
    <property type="entry name" value="AP-SPAP"/>
    <property type="match status" value="1"/>
</dbReference>
<dbReference type="Gene3D" id="3.30.1360.150">
    <property type="match status" value="1"/>
</dbReference>
<dbReference type="Gene3D" id="3.40.720.10">
    <property type="entry name" value="Alkaline Phosphatase, subunit A"/>
    <property type="match status" value="1"/>
</dbReference>
<dbReference type="InterPro" id="IPR017850">
    <property type="entry name" value="Alkaline_phosphatase_core_sf"/>
</dbReference>
<dbReference type="InterPro" id="IPR026263">
    <property type="entry name" value="Alkaline_phosphatase_prok"/>
</dbReference>
<dbReference type="InterPro" id="IPR002591">
    <property type="entry name" value="Phosphodiest/P_Trfase"/>
</dbReference>
<dbReference type="NCBIfam" id="NF042991">
    <property type="entry name" value="alk_phos_PafA"/>
    <property type="match status" value="1"/>
</dbReference>
<dbReference type="PANTHER" id="PTHR10151:SF120">
    <property type="entry name" value="BIS(5'-ADENOSYL)-TRIPHOSPHATASE"/>
    <property type="match status" value="1"/>
</dbReference>
<dbReference type="PANTHER" id="PTHR10151">
    <property type="entry name" value="ECTONUCLEOTIDE PYROPHOSPHATASE/PHOSPHODIESTERASE"/>
    <property type="match status" value="1"/>
</dbReference>
<dbReference type="Pfam" id="PF01663">
    <property type="entry name" value="Phosphodiest"/>
    <property type="match status" value="1"/>
</dbReference>
<dbReference type="PIRSF" id="PIRSF031924">
    <property type="entry name" value="Pi-irrepressible_AP"/>
    <property type="match status" value="1"/>
</dbReference>
<dbReference type="SUPFAM" id="SSF53649">
    <property type="entry name" value="Alkaline phosphatase-like"/>
    <property type="match status" value="1"/>
</dbReference>
<comment type="function">
    <text evidence="3">Alkaline phosphatase with broad substrate specificity. Has phosphatase activity towards nucleotide phosphates with a preference for ATP. Active towards a great variety of phosphomonoesters with the exception of 2',3'-cyclic AMP and myo-inositol hexakisphosphate.</text>
</comment>
<comment type="catalytic activity">
    <reaction evidence="3">
        <text>a phosphate monoester + H2O = an alcohol + phosphate</text>
        <dbReference type="Rhea" id="RHEA:15017"/>
        <dbReference type="ChEBI" id="CHEBI:15377"/>
        <dbReference type="ChEBI" id="CHEBI:30879"/>
        <dbReference type="ChEBI" id="CHEBI:43474"/>
        <dbReference type="ChEBI" id="CHEBI:67140"/>
        <dbReference type="EC" id="3.1.3.1"/>
    </reaction>
</comment>
<comment type="cofactor">
    <cofactor evidence="1">
        <name>Zn(2+)</name>
        <dbReference type="ChEBI" id="CHEBI:29105"/>
    </cofactor>
    <text evidence="1">Binds 2 Zn(2+) ions.</text>
</comment>
<comment type="activity regulation">
    <text evidence="3">Strongly inhibited by orthovanadate and EDTA. Also inhibited by inorganic phosphate.</text>
</comment>
<comment type="biophysicochemical properties">
    <kinetics>
        <KM evidence="3">115 uM for 4-nitrophenyl phosphate</KM>
        <KM evidence="3">74 uM for 3'-AMP</KM>
        <KM evidence="3">90 uM for 5'-AMP</KM>
        <KM evidence="3">35 uM for ADP</KM>
        <KM evidence="3">10 uM for ATP</KM>
    </kinetics>
    <phDependence>
        <text evidence="3">Optimum pH is 8.5 with 4-nitrophenyl phosphate as substrate. Has 50% residual activity at pH 7.5 and 30% at pH 9.0, being virtually inactive at pH 10 and at pH 5 or lower.</text>
    </phDependence>
    <temperatureDependence>
        <text evidence="3">Heat-labile. Incubation for 10 minutes at 50 or 60 degrees Celsius causes 40% and 60% inactivation, respectively. Heating at 100 degrees Celsius for 2 minutes causes total loss of activity. Heat-inactivated enzyme cannot be renaturated.</text>
    </temperatureDependence>
</comment>
<comment type="subcellular location">
    <subcellularLocation>
        <location evidence="3">Periplasm</location>
    </subcellularLocation>
</comment>
<comment type="induction">
    <text evidence="3">Expression is not repressed by inorganic phosphate.</text>
</comment>
<evidence type="ECO:0000250" key="1">
    <source>
        <dbReference type="UniProtKB" id="A1YYW7"/>
    </source>
</evidence>
<evidence type="ECO:0000255" key="2"/>
<evidence type="ECO:0000269" key="3">
    <source>
    </source>
</evidence>
<evidence type="ECO:0000303" key="4">
    <source>
    </source>
</evidence>
<evidence type="ECO:0000305" key="5"/>
<evidence type="ECO:0000312" key="6">
    <source>
        <dbReference type="EMBL" id="AAF80345.1"/>
    </source>
</evidence>
<evidence type="ECO:0007829" key="7">
    <source>
        <dbReference type="PDB" id="5TJ3"/>
    </source>
</evidence>
<keyword id="KW-0002">3D-structure</keyword>
<keyword id="KW-0378">Hydrolase</keyword>
<keyword id="KW-0479">Metal-binding</keyword>
<keyword id="KW-0574">Periplasm</keyword>
<keyword id="KW-0597">Phosphoprotein</keyword>
<keyword id="KW-0732">Signal</keyword>
<keyword id="KW-0862">Zinc</keyword>
<organism>
    <name type="scientific">Elizabethkingia meningoseptica</name>
    <name type="common">Chryseobacterium meningosepticum</name>
    <dbReference type="NCBI Taxonomy" id="238"/>
    <lineage>
        <taxon>Bacteria</taxon>
        <taxon>Pseudomonadati</taxon>
        <taxon>Bacteroidota</taxon>
        <taxon>Flavobacteriia</taxon>
        <taxon>Flavobacteriales</taxon>
        <taxon>Weeksellaceae</taxon>
        <taxon>Elizabethkingia</taxon>
    </lineage>
</organism>
<reference evidence="5 6" key="1">
    <citation type="journal article" date="2001" name="Microbiology">
        <title>The Chryseobacterium meningosepticum PafA enzyme: prototype of a new enzyme family of prokaryotic phosphate-irrepressible alkaline phosphatases?</title>
        <authorList>
            <person name="Berlutti F."/>
            <person name="Passariello C."/>
            <person name="Selan L."/>
            <person name="Thaller M.C."/>
            <person name="Rossolini G.M."/>
        </authorList>
    </citation>
    <scope>NUCLEOTIDE SEQUENCE [GENOMIC DNA]</scope>
    <scope>GENE NAME</scope>
    <scope>FUNCTION</scope>
    <scope>CATALYTIC ACTIVITY</scope>
    <scope>ACTIVITY REGULATION</scope>
    <scope>BIOPHYSICOCHEMICAL PROPERTIES</scope>
    <scope>SUBCELLULAR LOCATION</scope>
    <scope>INDUCTION</scope>
    <source>
        <strain evidence="6">ATCC 13254 / CCUG 4310 / CIP 6058 / LMG 12280 / NCTC 10585</strain>
    </source>
</reference>
<accession>Q9KJX5</accession>
<gene>
    <name evidence="6" type="primary">pafA</name>
</gene>
<proteinExistence type="evidence at protein level"/>
<name>ALPH_ELIME</name>
<protein>
    <recommendedName>
        <fullName evidence="4 6">Alkaline phosphatase PafA</fullName>
        <shortName evidence="4">AP PafA</shortName>
        <ecNumber evidence="3">3.1.3.1</ecNumber>
    </recommendedName>
</protein>